<proteinExistence type="inferred from homology"/>
<keyword id="KW-0028">Amino-acid biosynthesis</keyword>
<keyword id="KW-0067">ATP-binding</keyword>
<keyword id="KW-0963">Cytoplasm</keyword>
<keyword id="KW-0328">Glycosyltransferase</keyword>
<keyword id="KW-0368">Histidine biosynthesis</keyword>
<keyword id="KW-0460">Magnesium</keyword>
<keyword id="KW-0479">Metal-binding</keyword>
<keyword id="KW-0547">Nucleotide-binding</keyword>
<keyword id="KW-0808">Transferase</keyword>
<reference key="1">
    <citation type="journal article" date="2001" name="Nature">
        <title>Complete genome sequence of a multiple drug resistant Salmonella enterica serovar Typhi CT18.</title>
        <authorList>
            <person name="Parkhill J."/>
            <person name="Dougan G."/>
            <person name="James K.D."/>
            <person name="Thomson N.R."/>
            <person name="Pickard D."/>
            <person name="Wain J."/>
            <person name="Churcher C.M."/>
            <person name="Mungall K.L."/>
            <person name="Bentley S.D."/>
            <person name="Holden M.T.G."/>
            <person name="Sebaihia M."/>
            <person name="Baker S."/>
            <person name="Basham D."/>
            <person name="Brooks K."/>
            <person name="Chillingworth T."/>
            <person name="Connerton P."/>
            <person name="Cronin A."/>
            <person name="Davis P."/>
            <person name="Davies R.M."/>
            <person name="Dowd L."/>
            <person name="White N."/>
            <person name="Farrar J."/>
            <person name="Feltwell T."/>
            <person name="Hamlin N."/>
            <person name="Haque A."/>
            <person name="Hien T.T."/>
            <person name="Holroyd S."/>
            <person name="Jagels K."/>
            <person name="Krogh A."/>
            <person name="Larsen T.S."/>
            <person name="Leather S."/>
            <person name="Moule S."/>
            <person name="O'Gaora P."/>
            <person name="Parry C."/>
            <person name="Quail M.A."/>
            <person name="Rutherford K.M."/>
            <person name="Simmonds M."/>
            <person name="Skelton J."/>
            <person name="Stevens K."/>
            <person name="Whitehead S."/>
            <person name="Barrell B.G."/>
        </authorList>
    </citation>
    <scope>NUCLEOTIDE SEQUENCE [LARGE SCALE GENOMIC DNA]</scope>
    <source>
        <strain>CT18</strain>
    </source>
</reference>
<reference key="2">
    <citation type="journal article" date="2003" name="J. Bacteriol.">
        <title>Comparative genomics of Salmonella enterica serovar Typhi strains Ty2 and CT18.</title>
        <authorList>
            <person name="Deng W."/>
            <person name="Liou S.-R."/>
            <person name="Plunkett G. III"/>
            <person name="Mayhew G.F."/>
            <person name="Rose D.J."/>
            <person name="Burland V."/>
            <person name="Kodoyianni V."/>
            <person name="Schwartz D.C."/>
            <person name="Blattner F.R."/>
        </authorList>
    </citation>
    <scope>NUCLEOTIDE SEQUENCE [LARGE SCALE GENOMIC DNA]</scope>
    <source>
        <strain>ATCC 700931 / Ty2</strain>
    </source>
</reference>
<evidence type="ECO:0000255" key="1">
    <source>
        <dbReference type="HAMAP-Rule" id="MF_00079"/>
    </source>
</evidence>
<name>HIS1_SALTI</name>
<sequence>MLDNTRLRIAIQKSGRLSDDSRELLARCGIKINLHTQRLIAMAENMPIDILRVRDDDIPGLVMDGVVDLGIIGENVLEEELLNRRAQGEDPRYLTLRRLDFGGCRLSLATPVDEAWDGPAALDGKRIATSYPHLLKRYLDQKGVSFKSCLLNGSVEVAPRAGLADAICDLVSTGATLEANGLREVEVIYRSKACLIQRDGEMAQSKQQLIDKLLTRIQGVIQARESKYIMMHAPSERLEEVIALLPGAERPTILPLAGEQQRVAMHMVSSETLFWETMEKLKALGASSILVLPIEKMME</sequence>
<organism>
    <name type="scientific">Salmonella typhi</name>
    <dbReference type="NCBI Taxonomy" id="90370"/>
    <lineage>
        <taxon>Bacteria</taxon>
        <taxon>Pseudomonadati</taxon>
        <taxon>Pseudomonadota</taxon>
        <taxon>Gammaproteobacteria</taxon>
        <taxon>Enterobacterales</taxon>
        <taxon>Enterobacteriaceae</taxon>
        <taxon>Salmonella</taxon>
    </lineage>
</organism>
<comment type="function">
    <text evidence="1">Catalyzes the condensation of ATP and 5-phosphoribose 1-diphosphate to form N'-(5'-phosphoribosyl)-ATP (PR-ATP). Has a crucial role in the pathway because the rate of histidine biosynthesis seems to be controlled primarily by regulation of HisG enzymatic activity.</text>
</comment>
<comment type="catalytic activity">
    <reaction evidence="1">
        <text>1-(5-phospho-beta-D-ribosyl)-ATP + diphosphate = 5-phospho-alpha-D-ribose 1-diphosphate + ATP</text>
        <dbReference type="Rhea" id="RHEA:18473"/>
        <dbReference type="ChEBI" id="CHEBI:30616"/>
        <dbReference type="ChEBI" id="CHEBI:33019"/>
        <dbReference type="ChEBI" id="CHEBI:58017"/>
        <dbReference type="ChEBI" id="CHEBI:73183"/>
        <dbReference type="EC" id="2.4.2.17"/>
    </reaction>
</comment>
<comment type="cofactor">
    <cofactor evidence="1">
        <name>Mg(2+)</name>
        <dbReference type="ChEBI" id="CHEBI:18420"/>
    </cofactor>
</comment>
<comment type="activity regulation">
    <text evidence="1">Feedback inhibited by histidine.</text>
</comment>
<comment type="pathway">
    <text evidence="1">Amino-acid biosynthesis; L-histidine biosynthesis; L-histidine from 5-phospho-alpha-D-ribose 1-diphosphate: step 1/9.</text>
</comment>
<comment type="subunit">
    <text evidence="1">Equilibrium between an active dimeric form, an inactive hexameric form and higher aggregates. Interconversion between the various forms is largely reversible and is influenced by the natural substrates and inhibitors of the enzyme.</text>
</comment>
<comment type="subcellular location">
    <subcellularLocation>
        <location evidence="1">Cytoplasm</location>
    </subcellularLocation>
</comment>
<comment type="similarity">
    <text evidence="1">Belongs to the ATP phosphoribosyltransferase family. Long subfamily.</text>
</comment>
<accession>Q8Z5K1</accession>
<feature type="chain" id="PRO_0000151863" description="ATP phosphoribosyltransferase">
    <location>
        <begin position="1"/>
        <end position="299"/>
    </location>
</feature>
<dbReference type="EC" id="2.4.2.17" evidence="1"/>
<dbReference type="EMBL" id="AL513382">
    <property type="protein sequence ID" value="CAD02433.1"/>
    <property type="molecule type" value="Genomic_DNA"/>
</dbReference>
<dbReference type="EMBL" id="AE014613">
    <property type="protein sequence ID" value="AAO68493.1"/>
    <property type="molecule type" value="Genomic_DNA"/>
</dbReference>
<dbReference type="RefSeq" id="NP_456619.1">
    <property type="nucleotide sequence ID" value="NC_003198.1"/>
</dbReference>
<dbReference type="RefSeq" id="WP_000886604.1">
    <property type="nucleotide sequence ID" value="NZ_WSUR01000002.1"/>
</dbReference>
<dbReference type="SMR" id="Q8Z5K1"/>
<dbReference type="STRING" id="220341.gene:17586188"/>
<dbReference type="KEGG" id="stt:t0802"/>
<dbReference type="KEGG" id="sty:STY2280"/>
<dbReference type="PATRIC" id="fig|220341.7.peg.2300"/>
<dbReference type="eggNOG" id="COG0040">
    <property type="taxonomic scope" value="Bacteria"/>
</dbReference>
<dbReference type="HOGENOM" id="CLU_038115_1_0_6"/>
<dbReference type="OMA" id="YVMMDYD"/>
<dbReference type="OrthoDB" id="9801867at2"/>
<dbReference type="UniPathway" id="UPA00031">
    <property type="reaction ID" value="UER00006"/>
</dbReference>
<dbReference type="Proteomes" id="UP000000541">
    <property type="component" value="Chromosome"/>
</dbReference>
<dbReference type="Proteomes" id="UP000002670">
    <property type="component" value="Chromosome"/>
</dbReference>
<dbReference type="GO" id="GO:0005737">
    <property type="term" value="C:cytoplasm"/>
    <property type="evidence" value="ECO:0007669"/>
    <property type="project" value="UniProtKB-SubCell"/>
</dbReference>
<dbReference type="GO" id="GO:0005524">
    <property type="term" value="F:ATP binding"/>
    <property type="evidence" value="ECO:0007669"/>
    <property type="project" value="UniProtKB-KW"/>
</dbReference>
<dbReference type="GO" id="GO:0003879">
    <property type="term" value="F:ATP phosphoribosyltransferase activity"/>
    <property type="evidence" value="ECO:0007669"/>
    <property type="project" value="UniProtKB-UniRule"/>
</dbReference>
<dbReference type="GO" id="GO:0000287">
    <property type="term" value="F:magnesium ion binding"/>
    <property type="evidence" value="ECO:0007669"/>
    <property type="project" value="UniProtKB-UniRule"/>
</dbReference>
<dbReference type="GO" id="GO:0000105">
    <property type="term" value="P:L-histidine biosynthetic process"/>
    <property type="evidence" value="ECO:0007669"/>
    <property type="project" value="UniProtKB-UniRule"/>
</dbReference>
<dbReference type="CDD" id="cd13592">
    <property type="entry name" value="PBP2_HisGL2"/>
    <property type="match status" value="1"/>
</dbReference>
<dbReference type="FunFam" id="3.30.70.120:FF:000002">
    <property type="entry name" value="ATP phosphoribosyltransferase"/>
    <property type="match status" value="1"/>
</dbReference>
<dbReference type="FunFam" id="3.40.190.10:FF:000008">
    <property type="entry name" value="ATP phosphoribosyltransferase"/>
    <property type="match status" value="1"/>
</dbReference>
<dbReference type="Gene3D" id="3.30.70.120">
    <property type="match status" value="1"/>
</dbReference>
<dbReference type="Gene3D" id="3.40.190.10">
    <property type="entry name" value="Periplasmic binding protein-like II"/>
    <property type="match status" value="2"/>
</dbReference>
<dbReference type="HAMAP" id="MF_00079">
    <property type="entry name" value="HisG_Long"/>
    <property type="match status" value="1"/>
</dbReference>
<dbReference type="InterPro" id="IPR020621">
    <property type="entry name" value="ATP-PRT_HisG_long"/>
</dbReference>
<dbReference type="InterPro" id="IPR013820">
    <property type="entry name" value="ATP_PRibTrfase_cat"/>
</dbReference>
<dbReference type="InterPro" id="IPR018198">
    <property type="entry name" value="ATP_PRibTrfase_CS"/>
</dbReference>
<dbReference type="InterPro" id="IPR001348">
    <property type="entry name" value="ATP_PRibTrfase_HisG"/>
</dbReference>
<dbReference type="InterPro" id="IPR013115">
    <property type="entry name" value="HisG_C"/>
</dbReference>
<dbReference type="InterPro" id="IPR011322">
    <property type="entry name" value="N-reg_PII-like_a/b"/>
</dbReference>
<dbReference type="InterPro" id="IPR015867">
    <property type="entry name" value="N-reg_PII/ATP_PRibTrfase_C"/>
</dbReference>
<dbReference type="NCBIfam" id="TIGR00070">
    <property type="entry name" value="hisG"/>
    <property type="match status" value="1"/>
</dbReference>
<dbReference type="NCBIfam" id="TIGR03455">
    <property type="entry name" value="HisG_C-term"/>
    <property type="match status" value="1"/>
</dbReference>
<dbReference type="PANTHER" id="PTHR21403:SF8">
    <property type="entry name" value="ATP PHOSPHORIBOSYLTRANSFERASE"/>
    <property type="match status" value="1"/>
</dbReference>
<dbReference type="PANTHER" id="PTHR21403">
    <property type="entry name" value="ATP PHOSPHORIBOSYLTRANSFERASE ATP-PRTASE"/>
    <property type="match status" value="1"/>
</dbReference>
<dbReference type="Pfam" id="PF01634">
    <property type="entry name" value="HisG"/>
    <property type="match status" value="1"/>
</dbReference>
<dbReference type="Pfam" id="PF08029">
    <property type="entry name" value="HisG_C"/>
    <property type="match status" value="1"/>
</dbReference>
<dbReference type="SUPFAM" id="SSF54913">
    <property type="entry name" value="GlnB-like"/>
    <property type="match status" value="1"/>
</dbReference>
<dbReference type="SUPFAM" id="SSF53850">
    <property type="entry name" value="Periplasmic binding protein-like II"/>
    <property type="match status" value="1"/>
</dbReference>
<dbReference type="PROSITE" id="PS01316">
    <property type="entry name" value="ATP_P_PHORIBOSYLTR"/>
    <property type="match status" value="1"/>
</dbReference>
<protein>
    <recommendedName>
        <fullName evidence="1">ATP phosphoribosyltransferase</fullName>
        <shortName evidence="1">ATP-PRT</shortName>
        <shortName evidence="1">ATP-PRTase</shortName>
        <ecNumber evidence="1">2.4.2.17</ecNumber>
    </recommendedName>
</protein>
<gene>
    <name evidence="1" type="primary">hisG</name>
    <name type="ordered locus">STY2280</name>
    <name type="ordered locus">t0802</name>
</gene>